<comment type="catalytic activity">
    <reaction evidence="1">
        <text>(S)-malate + a quinone = a quinol + oxaloacetate</text>
        <dbReference type="Rhea" id="RHEA:46012"/>
        <dbReference type="ChEBI" id="CHEBI:15589"/>
        <dbReference type="ChEBI" id="CHEBI:16452"/>
        <dbReference type="ChEBI" id="CHEBI:24646"/>
        <dbReference type="ChEBI" id="CHEBI:132124"/>
        <dbReference type="EC" id="1.1.5.4"/>
    </reaction>
</comment>
<comment type="cofactor">
    <cofactor evidence="1">
        <name>FAD</name>
        <dbReference type="ChEBI" id="CHEBI:57692"/>
    </cofactor>
</comment>
<comment type="pathway">
    <text evidence="1">Carbohydrate metabolism; tricarboxylic acid cycle; oxaloacetate from (S)-malate (quinone route): step 1/1.</text>
</comment>
<comment type="similarity">
    <text evidence="1">Belongs to the MQO family.</text>
</comment>
<sequence length="491" mass="53621">MSNDPIDVVLIGGGIMSATLGAMIQRVQPGWSIRIYESLGEVAQESSNPWNNAGTGHAALCELNYMPEAEDGTVDPAKAISINEQFQLSRQFWASLVAAGDLPEPQTFINSTPHMTFVRGRENVRYLRRRYEELKDQPLFAGMEYSEDAETIAEWAPLLTKKRNRKQRIAATRQLAGTDVDFGALTRALVDDLVASGAELALNHRVCSLKRTKDGLWRIRARHEVGRTPREALARFVFVGAGGGALHLLQKSGISEIEGFGGFPISGQFLRTTNPAIVAQHKAKVYGKAAVGAPPMSVPHLDTRVVDGETSLLFGPYAGFSPKFLKTGTWWDLPGSIRLGNIGPMLAVARDNFDLMKYLIGELMAGREKKLAALREFMPTAKSEDWELIAAGQRVQVMKKDERKGGVLQFGTEVIAAADGSIAGLLGASPGASTAVPIMVDLLKRCFPERFEGWLPVLRELIPTVGTTLNDRPEEAEFVLKRTAAVLKLAQ</sequence>
<evidence type="ECO:0000255" key="1">
    <source>
        <dbReference type="HAMAP-Rule" id="MF_00212"/>
    </source>
</evidence>
<accession>Q6AGY2</accession>
<reference key="1">
    <citation type="journal article" date="2004" name="Mol. Plant Microbe Interact.">
        <title>The genome sequence of the Gram-positive sugarcane pathogen Leifsonia xyli subsp. xyli.</title>
        <authorList>
            <person name="Monteiro-Vitorello C.B."/>
            <person name="Camargo L.E.A."/>
            <person name="Van Sluys M.A."/>
            <person name="Kitajima J.P."/>
            <person name="Truffi D."/>
            <person name="do Amaral A.M."/>
            <person name="Harakava R."/>
            <person name="de Oliveira J.C.F."/>
            <person name="Wood D."/>
            <person name="de Oliveira M.C."/>
            <person name="Miyaki C.Y."/>
            <person name="Takita M.A."/>
            <person name="da Silva A.C.R."/>
            <person name="Furlan L.R."/>
            <person name="Carraro D.M."/>
            <person name="Camarotte G."/>
            <person name="Almeida N.F. Jr."/>
            <person name="Carrer H."/>
            <person name="Coutinho L.L."/>
            <person name="El-Dorry H.A."/>
            <person name="Ferro M.I.T."/>
            <person name="Gagliardi P.R."/>
            <person name="Giglioti E."/>
            <person name="Goldman M.H.S."/>
            <person name="Goldman G.H."/>
            <person name="Kimura E.T."/>
            <person name="Ferro E.S."/>
            <person name="Kuramae E.E."/>
            <person name="Lemos E.G.M."/>
            <person name="Lemos M.V.F."/>
            <person name="Mauro S.M.Z."/>
            <person name="Machado M.A."/>
            <person name="Marino C.L."/>
            <person name="Menck C.F."/>
            <person name="Nunes L.R."/>
            <person name="Oliveira R.C."/>
            <person name="Pereira G.G."/>
            <person name="Siqueira W."/>
            <person name="de Souza A.A."/>
            <person name="Tsai S.M."/>
            <person name="Zanca A.S."/>
            <person name="Simpson A.J.G."/>
            <person name="Brumbley S.M."/>
            <person name="Setubal J.C."/>
        </authorList>
    </citation>
    <scope>NUCLEOTIDE SEQUENCE [LARGE SCALE GENOMIC DNA]</scope>
    <source>
        <strain>CTCB07</strain>
    </source>
</reference>
<proteinExistence type="inferred from homology"/>
<protein>
    <recommendedName>
        <fullName evidence="1">Probable malate:quinone oxidoreductase</fullName>
        <ecNumber evidence="1">1.1.5.4</ecNumber>
    </recommendedName>
    <alternativeName>
        <fullName evidence="1">MQO</fullName>
    </alternativeName>
    <alternativeName>
        <fullName evidence="1">Malate dehydrogenase [quinone]</fullName>
    </alternativeName>
</protein>
<dbReference type="EC" id="1.1.5.4" evidence="1"/>
<dbReference type="EMBL" id="AE016822">
    <property type="protein sequence ID" value="AAT88363.1"/>
    <property type="molecule type" value="Genomic_DNA"/>
</dbReference>
<dbReference type="RefSeq" id="WP_011185366.1">
    <property type="nucleotide sequence ID" value="NC_006087.1"/>
</dbReference>
<dbReference type="SMR" id="Q6AGY2"/>
<dbReference type="STRING" id="281090.Lxx03470"/>
<dbReference type="KEGG" id="lxx:Lxx03470"/>
<dbReference type="eggNOG" id="COG0579">
    <property type="taxonomic scope" value="Bacteria"/>
</dbReference>
<dbReference type="HOGENOM" id="CLU_028151_0_0_11"/>
<dbReference type="UniPathway" id="UPA00223">
    <property type="reaction ID" value="UER01008"/>
</dbReference>
<dbReference type="Proteomes" id="UP000001306">
    <property type="component" value="Chromosome"/>
</dbReference>
<dbReference type="GO" id="GO:0047545">
    <property type="term" value="F:2-hydroxyglutarate dehydrogenase activity"/>
    <property type="evidence" value="ECO:0007669"/>
    <property type="project" value="TreeGrafter"/>
</dbReference>
<dbReference type="GO" id="GO:0008924">
    <property type="term" value="F:L-malate dehydrogenase (quinone) activity"/>
    <property type="evidence" value="ECO:0007669"/>
    <property type="project" value="UniProtKB-UniRule"/>
</dbReference>
<dbReference type="GO" id="GO:0006099">
    <property type="term" value="P:tricarboxylic acid cycle"/>
    <property type="evidence" value="ECO:0007669"/>
    <property type="project" value="UniProtKB-UniRule"/>
</dbReference>
<dbReference type="Gene3D" id="3.30.9.10">
    <property type="entry name" value="D-Amino Acid Oxidase, subunit A, domain 2"/>
    <property type="match status" value="1"/>
</dbReference>
<dbReference type="Gene3D" id="3.50.50.60">
    <property type="entry name" value="FAD/NAD(P)-binding domain"/>
    <property type="match status" value="1"/>
</dbReference>
<dbReference type="HAMAP" id="MF_00212">
    <property type="entry name" value="MQO"/>
    <property type="match status" value="1"/>
</dbReference>
<dbReference type="InterPro" id="IPR036188">
    <property type="entry name" value="FAD/NAD-bd_sf"/>
</dbReference>
<dbReference type="InterPro" id="IPR006231">
    <property type="entry name" value="MQO"/>
</dbReference>
<dbReference type="NCBIfam" id="TIGR01320">
    <property type="entry name" value="mal_quin_oxido"/>
    <property type="match status" value="1"/>
</dbReference>
<dbReference type="NCBIfam" id="NF003603">
    <property type="entry name" value="PRK05257.1-1"/>
    <property type="match status" value="1"/>
</dbReference>
<dbReference type="NCBIfam" id="NF003605">
    <property type="entry name" value="PRK05257.1-4"/>
    <property type="match status" value="1"/>
</dbReference>
<dbReference type="NCBIfam" id="NF003606">
    <property type="entry name" value="PRK05257.2-1"/>
    <property type="match status" value="1"/>
</dbReference>
<dbReference type="NCBIfam" id="NF003609">
    <property type="entry name" value="PRK05257.2-5"/>
    <property type="match status" value="1"/>
</dbReference>
<dbReference type="NCBIfam" id="NF003610">
    <property type="entry name" value="PRK05257.3-1"/>
    <property type="match status" value="1"/>
</dbReference>
<dbReference type="NCBIfam" id="NF003611">
    <property type="entry name" value="PRK05257.3-2"/>
    <property type="match status" value="1"/>
</dbReference>
<dbReference type="NCBIfam" id="NF003612">
    <property type="entry name" value="PRK05257.3-3"/>
    <property type="match status" value="1"/>
</dbReference>
<dbReference type="NCBIfam" id="NF009875">
    <property type="entry name" value="PRK13339.1"/>
    <property type="match status" value="1"/>
</dbReference>
<dbReference type="PANTHER" id="PTHR43104">
    <property type="entry name" value="L-2-HYDROXYGLUTARATE DEHYDROGENASE, MITOCHONDRIAL"/>
    <property type="match status" value="1"/>
</dbReference>
<dbReference type="PANTHER" id="PTHR43104:SF2">
    <property type="entry name" value="L-2-HYDROXYGLUTARATE DEHYDROGENASE, MITOCHONDRIAL"/>
    <property type="match status" value="1"/>
</dbReference>
<dbReference type="Pfam" id="PF06039">
    <property type="entry name" value="Mqo"/>
    <property type="match status" value="1"/>
</dbReference>
<dbReference type="SUPFAM" id="SSF51905">
    <property type="entry name" value="FAD/NAD(P)-binding domain"/>
    <property type="match status" value="1"/>
</dbReference>
<name>MQO_LEIXX</name>
<organism>
    <name type="scientific">Leifsonia xyli subsp. xyli (strain CTCB07)</name>
    <dbReference type="NCBI Taxonomy" id="281090"/>
    <lineage>
        <taxon>Bacteria</taxon>
        <taxon>Bacillati</taxon>
        <taxon>Actinomycetota</taxon>
        <taxon>Actinomycetes</taxon>
        <taxon>Micrococcales</taxon>
        <taxon>Microbacteriaceae</taxon>
        <taxon>Leifsonia</taxon>
    </lineage>
</organism>
<keyword id="KW-0274">FAD</keyword>
<keyword id="KW-0285">Flavoprotein</keyword>
<keyword id="KW-0560">Oxidoreductase</keyword>
<keyword id="KW-1185">Reference proteome</keyword>
<keyword id="KW-0816">Tricarboxylic acid cycle</keyword>
<feature type="chain" id="PRO_0000128720" description="Probable malate:quinone oxidoreductase">
    <location>
        <begin position="1"/>
        <end position="491"/>
    </location>
</feature>
<gene>
    <name evidence="1" type="primary">mqo</name>
    <name type="ordered locus">Lxx03470</name>
</gene>